<protein>
    <recommendedName>
        <fullName>Contactin-1</fullName>
    </recommendedName>
    <alternativeName>
        <fullName>Neural cell surface protein F3</fullName>
    </alternativeName>
</protein>
<sequence length="1021" mass="113495">MKTPLLVSHLLLISLTSCLGEFTWHRRYGHGVSEEDKGFGPIFEEQPINTIYPEESLEGKVSLNCRARASPFPVYKWRMNNGDVDLTNDRYSMVGGNLVINNPDKQKDAGIYYCLASNNYGMVRSTEATLSFGYLDPFPPEDRPEVKVKEGKGMVLLCDPPYHFPDDLSYRWLLNEFPVFITMDKRRFVSQTNGNLYIANVESSDRGNYSCFVSSPSITKSVFSKFIPLIPIPERTTKPYPADIVVQFKDIYTMMGQNVTLECFALGNPVPDIRWRKVLEPMPTTAEISTSGAVLKIFNIQLEDEGLYECEAENIRGKDKHQARIYVQAFPEWVEHINDTEVDIGSDLYWPCVATGKPIPTIRWLKNGYAYHKGELRLYDVTFENAGMYQCIAENAYGTIYANAELKILALAPTFEMNPMKKKILAAKGGRVIIECKPKAAPKPKFSWSKGTEWLVNSSRILIWEDGSLEINNITRNDGGIYTCFAENNRGKANSTGTLVITNPTRIILAPINADITVGENATMQCAASFDPSLDLTFVWSFNGYVIDFNKEITNIHYQRNFMLDANGELLIRNAQLKHAGRYTCTAQTIVDNSSASADLVVRGPPGPPGGLRIEDIRATSVALTWSRGSDNHSPISKYTIQTKTILSDDWKDAKTDPPIIEGNMESAKAVDLIPWMEYEFRVVATNTLGTGEPSIPSNRIKTDGAAPNVAPSDVGGGGGTNRELTITWAPLSREYHYGNNFGYIVAFKPFDGEEWKKVTVTNPDTGRYVHKDETMTPSTAFQVKVKAFNNKGDGPYSLIAVINSAQDAPSEAPTEVGVKVLSSSEISVHWKHVLEKIVESYQIRYWAGHDKEAAAHRVQVTSQEYSARLENLLPDTQYFIEVGACNSAGCGPSSDVIETFTRKAPPSQPPRIISSVRSGSRYIITWDHVVALSNESTVTGYKILYRPDGQHDGKLFSTHKHSIEVPIPRDGEYVVEVRAHSDGGDGVVSQVKISGVSTLSSGLLSLLLPSLGFLVFYSEF</sequence>
<name>CNTN1_RAT</name>
<dbReference type="EMBL" id="D38492">
    <property type="protein sequence ID" value="BAA07504.1"/>
    <property type="molecule type" value="mRNA"/>
</dbReference>
<dbReference type="PIR" id="A57112">
    <property type="entry name" value="A57112"/>
</dbReference>
<dbReference type="RefSeq" id="NP_476459.1">
    <property type="nucleotide sequence ID" value="NM_057118.2"/>
</dbReference>
<dbReference type="RefSeq" id="XP_006242239.1">
    <property type="nucleotide sequence ID" value="XM_006242177.5"/>
</dbReference>
<dbReference type="RefSeq" id="XP_017450105.1">
    <property type="nucleotide sequence ID" value="XM_017594616.3"/>
</dbReference>
<dbReference type="RefSeq" id="XP_038934226.1">
    <property type="nucleotide sequence ID" value="XM_039078298.1"/>
</dbReference>
<dbReference type="RefSeq" id="XP_063118969.1">
    <property type="nucleotide sequence ID" value="XM_063262899.1"/>
</dbReference>
<dbReference type="RefSeq" id="XP_063118970.1">
    <property type="nucleotide sequence ID" value="XM_063262900.1"/>
</dbReference>
<dbReference type="RefSeq" id="XP_063118971.1">
    <property type="nucleotide sequence ID" value="XM_063262901.1"/>
</dbReference>
<dbReference type="RefSeq" id="XP_063118972.1">
    <property type="nucleotide sequence ID" value="XM_063262902.1"/>
</dbReference>
<dbReference type="SMR" id="Q63198"/>
<dbReference type="BioGRID" id="250705">
    <property type="interactions" value="3"/>
</dbReference>
<dbReference type="CORUM" id="Q63198"/>
<dbReference type="DIP" id="DIP-53082N"/>
<dbReference type="FunCoup" id="Q63198">
    <property type="interactions" value="1867"/>
</dbReference>
<dbReference type="IntAct" id="Q63198">
    <property type="interactions" value="4"/>
</dbReference>
<dbReference type="MINT" id="Q63198"/>
<dbReference type="STRING" id="10116.ENSRNOP00000071355"/>
<dbReference type="GlyCosmos" id="Q63198">
    <property type="glycosylation" value="9 sites, 33 glycans"/>
</dbReference>
<dbReference type="GlyGen" id="Q63198">
    <property type="glycosylation" value="9 sites, 33 N-linked glycans (5 sites), 1 N-linked;o-linked glycan (2 sites)"/>
</dbReference>
<dbReference type="iPTMnet" id="Q63198"/>
<dbReference type="PhosphoSitePlus" id="Q63198"/>
<dbReference type="SwissPalm" id="Q63198"/>
<dbReference type="PaxDb" id="10116-ENSRNOP00000006219"/>
<dbReference type="ABCD" id="Q63198">
    <property type="antibodies" value="1 sequenced antibody"/>
</dbReference>
<dbReference type="Ensembl" id="ENSRNOT00000006219.5">
    <property type="protein sequence ID" value="ENSRNOP00000006219.3"/>
    <property type="gene ID" value="ENSRNOG00000004438.5"/>
</dbReference>
<dbReference type="GeneID" id="117258"/>
<dbReference type="KEGG" id="rno:117258"/>
<dbReference type="AGR" id="RGD:621300"/>
<dbReference type="CTD" id="1272"/>
<dbReference type="RGD" id="621300">
    <property type="gene designation" value="Cntn1"/>
</dbReference>
<dbReference type="eggNOG" id="KOG3513">
    <property type="taxonomic scope" value="Eukaryota"/>
</dbReference>
<dbReference type="GeneTree" id="ENSGT00940000155915"/>
<dbReference type="HOGENOM" id="CLU_005756_0_0_1"/>
<dbReference type="InParanoid" id="Q63198"/>
<dbReference type="OrthoDB" id="13936at9989"/>
<dbReference type="PhylomeDB" id="Q63198"/>
<dbReference type="TreeFam" id="TF351103"/>
<dbReference type="PRO" id="PR:Q63198"/>
<dbReference type="Proteomes" id="UP000002494">
    <property type="component" value="Chromosome 7"/>
</dbReference>
<dbReference type="Bgee" id="ENSRNOG00000004438">
    <property type="expression patterns" value="Expressed in cerebellum and 17 other cell types or tissues"/>
</dbReference>
<dbReference type="GO" id="GO:0030424">
    <property type="term" value="C:axon"/>
    <property type="evidence" value="ECO:0000318"/>
    <property type="project" value="GO_Central"/>
</dbReference>
<dbReference type="GO" id="GO:0098978">
    <property type="term" value="C:glutamatergic synapse"/>
    <property type="evidence" value="ECO:0000266"/>
    <property type="project" value="RGD"/>
</dbReference>
<dbReference type="GO" id="GO:0005886">
    <property type="term" value="C:plasma membrane"/>
    <property type="evidence" value="ECO:0000318"/>
    <property type="project" value="GO_Central"/>
</dbReference>
<dbReference type="GO" id="GO:0045211">
    <property type="term" value="C:postsynaptic membrane"/>
    <property type="evidence" value="ECO:0000266"/>
    <property type="project" value="RGD"/>
</dbReference>
<dbReference type="GO" id="GO:0042734">
    <property type="term" value="C:presynaptic membrane"/>
    <property type="evidence" value="ECO:0000266"/>
    <property type="project" value="RGD"/>
</dbReference>
<dbReference type="GO" id="GO:0098552">
    <property type="term" value="C:side of membrane"/>
    <property type="evidence" value="ECO:0007669"/>
    <property type="project" value="UniProtKB-KW"/>
</dbReference>
<dbReference type="GO" id="GO:0045202">
    <property type="term" value="C:synapse"/>
    <property type="evidence" value="ECO:0000266"/>
    <property type="project" value="RGD"/>
</dbReference>
<dbReference type="GO" id="GO:0030246">
    <property type="term" value="F:carbohydrate binding"/>
    <property type="evidence" value="ECO:0000266"/>
    <property type="project" value="RGD"/>
</dbReference>
<dbReference type="GO" id="GO:0098632">
    <property type="term" value="F:cell-cell adhesion mediator activity"/>
    <property type="evidence" value="ECO:0000318"/>
    <property type="project" value="GO_Central"/>
</dbReference>
<dbReference type="GO" id="GO:0007411">
    <property type="term" value="P:axon guidance"/>
    <property type="evidence" value="ECO:0000318"/>
    <property type="project" value="GO_Central"/>
</dbReference>
<dbReference type="GO" id="GO:0098609">
    <property type="term" value="P:cell-cell adhesion"/>
    <property type="evidence" value="ECO:0000318"/>
    <property type="project" value="GO_Central"/>
</dbReference>
<dbReference type="GO" id="GO:0032289">
    <property type="term" value="P:central nervous system myelin formation"/>
    <property type="evidence" value="ECO:0000266"/>
    <property type="project" value="RGD"/>
</dbReference>
<dbReference type="GO" id="GO:0021549">
    <property type="term" value="P:cerebellum development"/>
    <property type="evidence" value="ECO:0000266"/>
    <property type="project" value="RGD"/>
</dbReference>
<dbReference type="GO" id="GO:0010467">
    <property type="term" value="P:gene expression"/>
    <property type="evidence" value="ECO:0000266"/>
    <property type="project" value="RGD"/>
</dbReference>
<dbReference type="GO" id="GO:0007626">
    <property type="term" value="P:locomotory behavior"/>
    <property type="evidence" value="ECO:0000266"/>
    <property type="project" value="RGD"/>
</dbReference>
<dbReference type="GO" id="GO:0042552">
    <property type="term" value="P:myelination"/>
    <property type="evidence" value="ECO:0000266"/>
    <property type="project" value="RGD"/>
</dbReference>
<dbReference type="GO" id="GO:0031175">
    <property type="term" value="P:neuron projection development"/>
    <property type="evidence" value="ECO:0000266"/>
    <property type="project" value="RGD"/>
</dbReference>
<dbReference type="GO" id="GO:0007219">
    <property type="term" value="P:Notch signaling pathway"/>
    <property type="evidence" value="ECO:0007669"/>
    <property type="project" value="UniProtKB-KW"/>
</dbReference>
<dbReference type="GO" id="GO:0010628">
    <property type="term" value="P:positive regulation of gene expression"/>
    <property type="evidence" value="ECO:0000266"/>
    <property type="project" value="RGD"/>
</dbReference>
<dbReference type="GO" id="GO:0010976">
    <property type="term" value="P:positive regulation of neuron projection development"/>
    <property type="evidence" value="ECO:0000266"/>
    <property type="project" value="RGD"/>
</dbReference>
<dbReference type="GO" id="GO:0010765">
    <property type="term" value="P:positive regulation of sodium ion transport"/>
    <property type="evidence" value="ECO:0000266"/>
    <property type="project" value="RGD"/>
</dbReference>
<dbReference type="CDD" id="cd00063">
    <property type="entry name" value="FN3"/>
    <property type="match status" value="4"/>
</dbReference>
<dbReference type="CDD" id="cd05727">
    <property type="entry name" value="Ig2_Contactin-2-like"/>
    <property type="match status" value="1"/>
</dbReference>
<dbReference type="CDD" id="cd05852">
    <property type="entry name" value="Ig5_Contactin-1"/>
    <property type="match status" value="1"/>
</dbReference>
<dbReference type="CDD" id="cd04970">
    <property type="entry name" value="Ig6_Contactin"/>
    <property type="match status" value="1"/>
</dbReference>
<dbReference type="CDD" id="cd05849">
    <property type="entry name" value="IgI_1_Contactin-1"/>
    <property type="match status" value="1"/>
</dbReference>
<dbReference type="CDD" id="cd05851">
    <property type="entry name" value="IgI_3_Contactin-1"/>
    <property type="match status" value="1"/>
</dbReference>
<dbReference type="FunFam" id="2.60.40.10:FF:000035">
    <property type="entry name" value="Contactin 1"/>
    <property type="match status" value="1"/>
</dbReference>
<dbReference type="FunFam" id="2.60.40.10:FF:000044">
    <property type="entry name" value="Contactin 1"/>
    <property type="match status" value="1"/>
</dbReference>
<dbReference type="FunFam" id="2.60.40.10:FF:000047">
    <property type="entry name" value="Contactin 1"/>
    <property type="match status" value="1"/>
</dbReference>
<dbReference type="FunFam" id="2.60.40.10:FF:000052">
    <property type="entry name" value="Contactin 1"/>
    <property type="match status" value="1"/>
</dbReference>
<dbReference type="FunFam" id="2.60.40.10:FF:000054">
    <property type="entry name" value="Contactin 1"/>
    <property type="match status" value="1"/>
</dbReference>
<dbReference type="FunFam" id="2.60.40.10:FF:000064">
    <property type="entry name" value="Contactin 1"/>
    <property type="match status" value="1"/>
</dbReference>
<dbReference type="FunFam" id="2.60.40.10:FF:000526">
    <property type="entry name" value="Contactin 1"/>
    <property type="match status" value="1"/>
</dbReference>
<dbReference type="FunFam" id="2.60.40.10:FF:000004">
    <property type="entry name" value="DCC isoform 1"/>
    <property type="match status" value="2"/>
</dbReference>
<dbReference type="FunFam" id="2.60.40.10:FF:000005">
    <property type="entry name" value="Neuronal cell adhesion molecule"/>
    <property type="match status" value="1"/>
</dbReference>
<dbReference type="Gene3D" id="2.60.40.10">
    <property type="entry name" value="Immunoglobulins"/>
    <property type="match status" value="10"/>
</dbReference>
<dbReference type="InterPro" id="IPR047102">
    <property type="entry name" value="Contactin-1_2_Ig1"/>
</dbReference>
<dbReference type="InterPro" id="IPR036992">
    <property type="entry name" value="Contactin-1_Ig1"/>
</dbReference>
<dbReference type="InterPro" id="IPR047100">
    <property type="entry name" value="Contactin-1_Ig3"/>
</dbReference>
<dbReference type="InterPro" id="IPR047101">
    <property type="entry name" value="Contactin-1_Ig6"/>
</dbReference>
<dbReference type="InterPro" id="IPR003961">
    <property type="entry name" value="FN3_dom"/>
</dbReference>
<dbReference type="InterPro" id="IPR036116">
    <property type="entry name" value="FN3_sf"/>
</dbReference>
<dbReference type="InterPro" id="IPR007110">
    <property type="entry name" value="Ig-like_dom"/>
</dbReference>
<dbReference type="InterPro" id="IPR036179">
    <property type="entry name" value="Ig-like_dom_sf"/>
</dbReference>
<dbReference type="InterPro" id="IPR013783">
    <property type="entry name" value="Ig-like_fold"/>
</dbReference>
<dbReference type="InterPro" id="IPR013098">
    <property type="entry name" value="Ig_I-set"/>
</dbReference>
<dbReference type="InterPro" id="IPR003599">
    <property type="entry name" value="Ig_sub"/>
</dbReference>
<dbReference type="InterPro" id="IPR003598">
    <property type="entry name" value="Ig_sub2"/>
</dbReference>
<dbReference type="InterPro" id="IPR013151">
    <property type="entry name" value="Immunoglobulin_dom"/>
</dbReference>
<dbReference type="PANTHER" id="PTHR44170:SF10">
    <property type="entry name" value="CONTACTIN-1"/>
    <property type="match status" value="1"/>
</dbReference>
<dbReference type="PANTHER" id="PTHR44170">
    <property type="entry name" value="PROTEIN SIDEKICK"/>
    <property type="match status" value="1"/>
</dbReference>
<dbReference type="Pfam" id="PF00041">
    <property type="entry name" value="fn3"/>
    <property type="match status" value="2"/>
</dbReference>
<dbReference type="Pfam" id="PF07679">
    <property type="entry name" value="I-set"/>
    <property type="match status" value="2"/>
</dbReference>
<dbReference type="Pfam" id="PF00047">
    <property type="entry name" value="ig"/>
    <property type="match status" value="1"/>
</dbReference>
<dbReference type="Pfam" id="PF13927">
    <property type="entry name" value="Ig_3"/>
    <property type="match status" value="2"/>
</dbReference>
<dbReference type="SMART" id="SM00060">
    <property type="entry name" value="FN3"/>
    <property type="match status" value="4"/>
</dbReference>
<dbReference type="SMART" id="SM00409">
    <property type="entry name" value="IG"/>
    <property type="match status" value="6"/>
</dbReference>
<dbReference type="SMART" id="SM00408">
    <property type="entry name" value="IGc2"/>
    <property type="match status" value="5"/>
</dbReference>
<dbReference type="SUPFAM" id="SSF49265">
    <property type="entry name" value="Fibronectin type III"/>
    <property type="match status" value="2"/>
</dbReference>
<dbReference type="SUPFAM" id="SSF48726">
    <property type="entry name" value="Immunoglobulin"/>
    <property type="match status" value="6"/>
</dbReference>
<dbReference type="PROSITE" id="PS50853">
    <property type="entry name" value="FN3"/>
    <property type="match status" value="4"/>
</dbReference>
<dbReference type="PROSITE" id="PS50835">
    <property type="entry name" value="IG_LIKE"/>
    <property type="match status" value="6"/>
</dbReference>
<comment type="function">
    <text evidence="8">Contactins mediate cell surface interactions during nervous system development. Involved in the formation of paranodal axo-glial junctions in myelinated peripheral nerves and in the signaling between axons and myelinating glial cells via its association with CNTNAP1. Participates in oligodendrocytes generation by acting as a ligand of NOTCH1. Its association with NOTCH1 promotes NOTCH1 activation through the released notch intracellular domain (NICD) and subsequent translocation to the nucleus. Interaction with TNR induces a repulsion of neurons and an inhibition of neurite outgrowth.</text>
</comment>
<comment type="subunit">
    <text evidence="1 2 7 8 9">Monomer (By similarity). Interacts with NOTCH1 (By similarity). Interacts with CNTNAP1 in cis form and TNR (PubMed:9081628, PubMed:9118959). Binds to the carbonic-anhydrase like domain of PTPRZ1 (PubMed:7628014). Detected in a complex with NRCAM and PTPRB (By similarity). Interacts with TASOR (By similarity).</text>
</comment>
<comment type="subcellular location">
    <subcellularLocation>
        <location>Cell membrane</location>
        <topology>Lipid-anchor</topology>
        <topology>GPI-anchor</topology>
    </subcellularLocation>
</comment>
<comment type="tissue specificity">
    <text evidence="10">Expressed by neurons, oligodendrocytes and their progenitors (at protein level). Myelination regulates the expression being down-regulated when neurons are in contact with Schwann cells.</text>
</comment>
<comment type="similarity">
    <text evidence="11">Belongs to the immunoglobulin superfamily. Contactin family.</text>
</comment>
<evidence type="ECO:0000250" key="1">
    <source>
        <dbReference type="UniProtKB" id="P12960"/>
    </source>
</evidence>
<evidence type="ECO:0000250" key="2">
    <source>
        <dbReference type="UniProtKB" id="Q12860"/>
    </source>
</evidence>
<evidence type="ECO:0000255" key="3"/>
<evidence type="ECO:0000255" key="4">
    <source>
        <dbReference type="PROSITE-ProRule" id="PRU00114"/>
    </source>
</evidence>
<evidence type="ECO:0000255" key="5">
    <source>
        <dbReference type="PROSITE-ProRule" id="PRU00316"/>
    </source>
</evidence>
<evidence type="ECO:0000256" key="6">
    <source>
        <dbReference type="SAM" id="MobiDB-lite"/>
    </source>
</evidence>
<evidence type="ECO:0000269" key="7">
    <source>
    </source>
</evidence>
<evidence type="ECO:0000269" key="8">
    <source>
    </source>
</evidence>
<evidence type="ECO:0000269" key="9">
    <source>
    </source>
</evidence>
<evidence type="ECO:0000269" key="10">
    <source>
    </source>
</evidence>
<evidence type="ECO:0000305" key="11"/>
<evidence type="ECO:0007744" key="12">
    <source>
    </source>
</evidence>
<gene>
    <name type="primary">Cntn1</name>
</gene>
<accession>Q63198</accession>
<proteinExistence type="evidence at protein level"/>
<organism>
    <name type="scientific">Rattus norvegicus</name>
    <name type="common">Rat</name>
    <dbReference type="NCBI Taxonomy" id="10116"/>
    <lineage>
        <taxon>Eukaryota</taxon>
        <taxon>Metazoa</taxon>
        <taxon>Chordata</taxon>
        <taxon>Craniata</taxon>
        <taxon>Vertebrata</taxon>
        <taxon>Euteleostomi</taxon>
        <taxon>Mammalia</taxon>
        <taxon>Eutheria</taxon>
        <taxon>Euarchontoglires</taxon>
        <taxon>Glires</taxon>
        <taxon>Rodentia</taxon>
        <taxon>Myomorpha</taxon>
        <taxon>Muroidea</taxon>
        <taxon>Muridae</taxon>
        <taxon>Murinae</taxon>
        <taxon>Rattus</taxon>
    </lineage>
</organism>
<keyword id="KW-0130">Cell adhesion</keyword>
<keyword id="KW-1003">Cell membrane</keyword>
<keyword id="KW-1015">Disulfide bond</keyword>
<keyword id="KW-0325">Glycoprotein</keyword>
<keyword id="KW-0336">GPI-anchor</keyword>
<keyword id="KW-0393">Immunoglobulin domain</keyword>
<keyword id="KW-0449">Lipoprotein</keyword>
<keyword id="KW-0472">Membrane</keyword>
<keyword id="KW-0914">Notch signaling pathway</keyword>
<keyword id="KW-1185">Reference proteome</keyword>
<keyword id="KW-0677">Repeat</keyword>
<keyword id="KW-0732">Signal</keyword>
<reference key="1">
    <citation type="journal article" date="1995" name="Neurosci. Lett.">
        <title>Developmental expression of the neural adhesion molecule F3 in the rat brain.</title>
        <authorList>
            <person name="Hosoya H."/>
            <person name="Shimazaki K."/>
            <person name="Kobayashi S."/>
            <person name="Takahashi H."/>
            <person name="Shirasawa T."/>
            <person name="Takenawa T."/>
            <person name="Watanabe K."/>
        </authorList>
    </citation>
    <scope>NUCLEOTIDE SEQUENCE [MRNA]</scope>
    <source>
        <strain>Wistar</strain>
        <tissue>Brain</tissue>
    </source>
</reference>
<reference key="2">
    <citation type="journal article" date="1995" name="Cell">
        <title>The carbonic anhydrase domain of receptor tyrosine phosphatase beta is a functional ligand for the axonal cell recognition molecule contactin.</title>
        <authorList>
            <person name="Peles E."/>
            <person name="Nativ M."/>
            <person name="Campbell P.L."/>
            <person name="Sakurai T."/>
            <person name="Martinez R."/>
            <person name="Lev S."/>
            <person name="Clary D.O."/>
            <person name="Schilling J."/>
            <person name="Barnea G."/>
            <person name="Plowman G.D."/>
            <person name="Grumet M."/>
            <person name="Schlessinger J."/>
        </authorList>
    </citation>
    <scope>INTERACTION WITH PTPRZ1</scope>
</reference>
<reference key="3">
    <citation type="journal article" date="1996" name="Eur. J. Neurosci.">
        <title>Distinct effects of recombinant tenascin-R domains in neuronal cell functions and identification of the domain interacting with the neuronal recognition molecule F3/11.</title>
        <authorList>
            <person name="Xiao Z.-C."/>
            <person name="Taylor J."/>
            <person name="Montag D."/>
            <person name="Rougon G."/>
            <person name="Schachner M."/>
        </authorList>
    </citation>
    <scope>INTERACTION WITH TNR</scope>
    <scope>FUNCTION</scope>
</reference>
<reference key="4">
    <citation type="journal article" date="1997" name="EMBO J.">
        <title>Identification of a novel contactin-associated transmembrane receptor with multiple domains implicated in protein-protein interactions.</title>
        <authorList>
            <person name="Peles E."/>
            <person name="Nativ M."/>
            <person name="Lustig M."/>
            <person name="Grumet M."/>
            <person name="Schilling J."/>
            <person name="Martinez R."/>
            <person name="Plowman G.D."/>
            <person name="Schlessinger J."/>
        </authorList>
    </citation>
    <scope>INTERACTION WITH CNTNAP1</scope>
</reference>
<reference key="5">
    <citation type="journal article" date="1997" name="J. Cell Biol.">
        <title>The axonal membrane protein Caspr, a homologue of neurexin IV, is a component of the septate-like paranodal junctions that assemble during myelination.</title>
        <authorList>
            <person name="Einheber S."/>
            <person name="Zanazzi G."/>
            <person name="Ching W."/>
            <person name="Scherer S."/>
            <person name="Milner T.A."/>
            <person name="Peles E."/>
            <person name="Salzer J.L."/>
        </authorList>
    </citation>
    <scope>TISSUE SPECIFICITY</scope>
</reference>
<reference key="6">
    <citation type="journal article" date="2013" name="J. Proteome Res.">
        <title>Site-specific glycan-peptide analysis for determination of N-glycoproteome heterogeneity.</title>
        <authorList>
            <person name="Parker B.L."/>
            <person name="Thaysen-Andersen M."/>
            <person name="Solis N."/>
            <person name="Scott N.E."/>
            <person name="Larsen M.R."/>
            <person name="Graham M.E."/>
            <person name="Packer N.H."/>
            <person name="Cordwell S.J."/>
        </authorList>
    </citation>
    <scope>GLYCOSYLATION [LARGE SCALE ANALYSIS] AT ASN-338; ASN-457; ASN-494 AND ASN-935</scope>
    <scope>IDENTIFICATION BY MASS SPECTROMETRY [LARGE SCALE ANALYSIS]</scope>
    <source>
        <tissue>Brain</tissue>
    </source>
</reference>
<feature type="signal peptide" evidence="3">
    <location>
        <begin position="1"/>
        <end position="20"/>
    </location>
</feature>
<feature type="chain" id="PRO_0000014689" description="Contactin-1">
    <location>
        <begin position="21"/>
        <end position="1001"/>
    </location>
</feature>
<feature type="propeptide" id="PRO_0000014690" description="Removed in mature form" evidence="3">
    <location>
        <begin position="1002"/>
        <end position="1021"/>
    </location>
</feature>
<feature type="domain" description="Ig-like C2-type 1">
    <location>
        <begin position="41"/>
        <end position="131"/>
    </location>
</feature>
<feature type="domain" description="Ig-like C2-type 2">
    <location>
        <begin position="137"/>
        <end position="223"/>
    </location>
</feature>
<feature type="domain" description="Ig-like C2-type 3">
    <location>
        <begin position="241"/>
        <end position="326"/>
    </location>
</feature>
<feature type="domain" description="Ig-like C2-type 4">
    <location>
        <begin position="331"/>
        <end position="407"/>
    </location>
</feature>
<feature type="domain" description="Ig-like C2-type 5">
    <location>
        <begin position="413"/>
        <end position="500"/>
    </location>
</feature>
<feature type="domain" description="Ig-like C2-type 6">
    <location>
        <begin position="504"/>
        <end position="603"/>
    </location>
</feature>
<feature type="domain" description="Fibronectin type-III 1" evidence="5">
    <location>
        <begin position="608"/>
        <end position="706"/>
    </location>
</feature>
<feature type="domain" description="Fibronectin type-III 2" evidence="5">
    <location>
        <begin position="711"/>
        <end position="808"/>
    </location>
</feature>
<feature type="domain" description="Fibronectin type-III 3" evidence="5">
    <location>
        <begin position="813"/>
        <end position="908"/>
    </location>
</feature>
<feature type="domain" description="Fibronectin type-III 4" evidence="5">
    <location>
        <begin position="909"/>
        <end position="1002"/>
    </location>
</feature>
<feature type="region of interest" description="Disordered" evidence="6">
    <location>
        <begin position="695"/>
        <end position="719"/>
    </location>
</feature>
<feature type="lipid moiety-binding region" description="GPI-anchor amidated serine" evidence="3">
    <location>
        <position position="1001"/>
    </location>
</feature>
<feature type="glycosylation site" description="N-linked (GlcNAc...) asparagine" evidence="3">
    <location>
        <position position="208"/>
    </location>
</feature>
<feature type="glycosylation site" description="N-linked (GlcNAc...) asparagine" evidence="3">
    <location>
        <position position="258"/>
    </location>
</feature>
<feature type="glycosylation site" description="N-linked (GlcNAc...) asparagine" evidence="12">
    <location>
        <position position="338"/>
    </location>
</feature>
<feature type="glycosylation site" description="N-linked (GlcNAc...) asparagine" evidence="12">
    <location>
        <position position="457"/>
    </location>
</feature>
<feature type="glycosylation site" description="N-linked (GlcNAc...) asparagine" evidence="3">
    <location>
        <position position="473"/>
    </location>
</feature>
<feature type="glycosylation site" description="N-linked (GlcNAc...) asparagine" evidence="12">
    <location>
        <position position="494"/>
    </location>
</feature>
<feature type="glycosylation site" description="N-linked (GlcNAc...) asparagine" evidence="3">
    <location>
        <position position="521"/>
    </location>
</feature>
<feature type="glycosylation site" description="N-linked (GlcNAc...) asparagine" evidence="3">
    <location>
        <position position="593"/>
    </location>
</feature>
<feature type="glycosylation site" description="N-linked (GlcNAc...) asparagine" evidence="12">
    <location>
        <position position="935"/>
    </location>
</feature>
<feature type="disulfide bond" evidence="4">
    <location>
        <begin position="65"/>
        <end position="114"/>
    </location>
</feature>
<feature type="disulfide bond" evidence="4">
    <location>
        <begin position="158"/>
        <end position="211"/>
    </location>
</feature>
<feature type="disulfide bond" evidence="4">
    <location>
        <begin position="263"/>
        <end position="310"/>
    </location>
</feature>
<feature type="disulfide bond" evidence="4">
    <location>
        <begin position="352"/>
        <end position="391"/>
    </location>
</feature>
<feature type="disulfide bond" evidence="4">
    <location>
        <begin position="436"/>
        <end position="484"/>
    </location>
</feature>
<feature type="disulfide bond" evidence="4">
    <location>
        <begin position="526"/>
        <end position="585"/>
    </location>
</feature>